<protein>
    <recommendedName>
        <fullName evidence="4">Solute carrier family 25 member 3</fullName>
    </recommendedName>
    <alternativeName>
        <fullName evidence="4">Phosphate carrier protein, mitochondrial</fullName>
    </alternativeName>
    <alternativeName>
        <fullName>Phosphate transport protein</fullName>
        <shortName>PTP</shortName>
    </alternativeName>
</protein>
<proteinExistence type="evidence at transcript level"/>
<organism>
    <name type="scientific">Pongo abelii</name>
    <name type="common">Sumatran orangutan</name>
    <name type="synonym">Pongo pygmaeus abelii</name>
    <dbReference type="NCBI Taxonomy" id="9601"/>
    <lineage>
        <taxon>Eukaryota</taxon>
        <taxon>Metazoa</taxon>
        <taxon>Chordata</taxon>
        <taxon>Craniata</taxon>
        <taxon>Vertebrata</taxon>
        <taxon>Euteleostomi</taxon>
        <taxon>Mammalia</taxon>
        <taxon>Eutheria</taxon>
        <taxon>Euarchontoglires</taxon>
        <taxon>Primates</taxon>
        <taxon>Haplorrhini</taxon>
        <taxon>Catarrhini</taxon>
        <taxon>Hominidae</taxon>
        <taxon>Pongo</taxon>
    </lineage>
</organism>
<dbReference type="EMBL" id="CR859997">
    <property type="protein sequence ID" value="CAH92148.1"/>
    <property type="molecule type" value="mRNA"/>
</dbReference>
<dbReference type="RefSeq" id="NP_001126257.1">
    <property type="nucleotide sequence ID" value="NM_001132785.1"/>
</dbReference>
<dbReference type="SMR" id="Q5R7W2"/>
<dbReference type="FunCoup" id="Q5R7W2">
    <property type="interactions" value="1688"/>
</dbReference>
<dbReference type="STRING" id="9601.ENSPPYP00000005541"/>
<dbReference type="GeneID" id="100173229"/>
<dbReference type="KEGG" id="pon:100173229"/>
<dbReference type="CTD" id="5250"/>
<dbReference type="eggNOG" id="KOG0767">
    <property type="taxonomic scope" value="Eukaryota"/>
</dbReference>
<dbReference type="InParanoid" id="Q5R7W2"/>
<dbReference type="OrthoDB" id="427452at2759"/>
<dbReference type="Proteomes" id="UP000001595">
    <property type="component" value="Unplaced"/>
</dbReference>
<dbReference type="GO" id="GO:0005743">
    <property type="term" value="C:mitochondrial inner membrane"/>
    <property type="evidence" value="ECO:0000250"/>
    <property type="project" value="UniProtKB"/>
</dbReference>
<dbReference type="GO" id="GO:0005315">
    <property type="term" value="F:phosphate transmembrane transporter activity"/>
    <property type="evidence" value="ECO:0007669"/>
    <property type="project" value="InterPro"/>
</dbReference>
<dbReference type="GO" id="GO:0015317">
    <property type="term" value="F:phosphate:proton symporter activity"/>
    <property type="evidence" value="ECO:0000250"/>
    <property type="project" value="UniProtKB"/>
</dbReference>
<dbReference type="GO" id="GO:1990547">
    <property type="term" value="P:mitochondrial phosphate ion transmembrane transport"/>
    <property type="evidence" value="ECO:0007669"/>
    <property type="project" value="InterPro"/>
</dbReference>
<dbReference type="FunFam" id="1.50.40.10:FF:000005">
    <property type="entry name" value="Mitochondrial phosphate carrier protein 2"/>
    <property type="match status" value="1"/>
</dbReference>
<dbReference type="Gene3D" id="1.50.40.10">
    <property type="entry name" value="Mitochondrial carrier domain"/>
    <property type="match status" value="1"/>
</dbReference>
<dbReference type="InterPro" id="IPR018108">
    <property type="entry name" value="Mitochondrial_sb/sol_carrier"/>
</dbReference>
<dbReference type="InterPro" id="IPR023395">
    <property type="entry name" value="Mt_carrier_dom_sf"/>
</dbReference>
<dbReference type="InterPro" id="IPR044677">
    <property type="entry name" value="SLC25A3/Pic2/Mir1-like"/>
</dbReference>
<dbReference type="PANTHER" id="PTHR45671">
    <property type="entry name" value="SOLUTE CARRIER FAMILY 25 (MITOCHONDRIAL CARRIER PHOSPHATE CARRIER), MEMBER 3, LIKE-RELATED-RELATED"/>
    <property type="match status" value="1"/>
</dbReference>
<dbReference type="PANTHER" id="PTHR45671:SF10">
    <property type="entry name" value="SOLUTE CARRIER FAMILY 25 MEMBER 3"/>
    <property type="match status" value="1"/>
</dbReference>
<dbReference type="Pfam" id="PF00153">
    <property type="entry name" value="Mito_carr"/>
    <property type="match status" value="3"/>
</dbReference>
<dbReference type="SUPFAM" id="SSF103506">
    <property type="entry name" value="Mitochondrial carrier"/>
    <property type="match status" value="1"/>
</dbReference>
<dbReference type="PROSITE" id="PS50920">
    <property type="entry name" value="SOLCAR"/>
    <property type="match status" value="3"/>
</dbReference>
<reference key="1">
    <citation type="submission" date="2004-11" db="EMBL/GenBank/DDBJ databases">
        <authorList>
            <consortium name="The German cDNA consortium"/>
        </authorList>
    </citation>
    <scope>NUCLEOTIDE SEQUENCE [LARGE SCALE MRNA]</scope>
    <source>
        <tissue>Brain cortex</tissue>
    </source>
</reference>
<sequence length="361" mass="40072">MFSSVAHLARANPFNTPHLQLVHDGLGDFRSRPPGPTGQPRRPRNLAAAAVEEYSCEFGSAKYYALCGFGGVLSCGLTHTAVVPLDLVKCRMQVDPQKYKGIFNGFSVTLKEDGVRGLAKGWAPTFLGYSMQGLCKFGFYEVFKVLYSNMLGEENTYLWRTSLYLAASASAEFFADIALAPMEAAKVRIQTQPGYANTLRDAAPKMYKEEGLKAFYKGVAPLWMRQIPYTMMKFACFERTVEALYKFVVPKPRSECSKPEQLVVTFVAGYIAGVFCAIVSHPADSVVSVLNKEKGSSASLVLKRLGFKGVWKGLFARIIMIGTLTALQWFIYDSVKVYFRLPRPPPPEMPESLKKKLGLTQ</sequence>
<name>S25A3_PONAB</name>
<accession>Q5R7W2</accession>
<evidence type="ECO:0000250" key="1"/>
<evidence type="ECO:0000250" key="2">
    <source>
        <dbReference type="UniProtKB" id="P12234"/>
    </source>
</evidence>
<evidence type="ECO:0000250" key="3">
    <source>
        <dbReference type="UniProtKB" id="P16036"/>
    </source>
</evidence>
<evidence type="ECO:0000250" key="4">
    <source>
        <dbReference type="UniProtKB" id="Q00325"/>
    </source>
</evidence>
<evidence type="ECO:0000250" key="5">
    <source>
        <dbReference type="UniProtKB" id="Q8VEM8"/>
    </source>
</evidence>
<evidence type="ECO:0000255" key="6"/>
<evidence type="ECO:0000256" key="7">
    <source>
        <dbReference type="SAM" id="MobiDB-lite"/>
    </source>
</evidence>
<evidence type="ECO:0000305" key="8"/>
<comment type="function">
    <text evidence="2 3 4">Inorganic ion transporter that transports phosphate or copper ions across the mitochondrial inner membrane into the matrix compartment (By similarity). Mediates proton-coupled symport of phosphate ions necessary for mitochondrial oxidative phosphorylation of ADP to ATP (By similarity). Transports copper ions probably in the form of anionic copper(I) complexes to maintain mitochondrial matrix copper pool and to supply copper for cytochrome C oxidase complex assembly (By similarity). May also play a role in regulation of the mitochondrial permeability transition pore (mPTP) (By similarity).</text>
</comment>
<comment type="catalytic activity">
    <reaction evidence="2">
        <text>phosphate(in) + H(+)(in) = phosphate(out) + H(+)(out)</text>
        <dbReference type="Rhea" id="RHEA:29939"/>
        <dbReference type="ChEBI" id="CHEBI:15378"/>
        <dbReference type="ChEBI" id="CHEBI:43474"/>
    </reaction>
    <physiologicalReaction direction="right-to-left" evidence="2">
        <dbReference type="Rhea" id="RHEA:29941"/>
    </physiologicalReaction>
</comment>
<comment type="subunit">
    <text evidence="3">Interacts with PPIF; the interaction is impaired by CsA.</text>
</comment>
<comment type="subcellular location">
    <subcellularLocation>
        <location evidence="2">Mitochondrion inner membrane</location>
        <topology evidence="2">Multi-pass membrane protein</topology>
    </subcellularLocation>
</comment>
<comment type="similarity">
    <text evidence="8">Belongs to the mitochondrial carrier (TC 2.A.29) family.</text>
</comment>
<keyword id="KW-0007">Acetylation</keyword>
<keyword id="KW-0472">Membrane</keyword>
<keyword id="KW-0488">Methylation</keyword>
<keyword id="KW-0496">Mitochondrion</keyword>
<keyword id="KW-0999">Mitochondrion inner membrane</keyword>
<keyword id="KW-0597">Phosphoprotein</keyword>
<keyword id="KW-1185">Reference proteome</keyword>
<keyword id="KW-0677">Repeat</keyword>
<keyword id="KW-0769">Symport</keyword>
<keyword id="KW-0809">Transit peptide</keyword>
<keyword id="KW-0812">Transmembrane</keyword>
<keyword id="KW-1133">Transmembrane helix</keyword>
<keyword id="KW-0813">Transport</keyword>
<feature type="transit peptide" description="Mitochondrion" evidence="1">
    <location>
        <begin position="1"/>
        <end position="49"/>
    </location>
</feature>
<feature type="chain" id="PRO_0000294072" description="Solute carrier family 25 member 3">
    <location>
        <begin position="50"/>
        <end position="361"/>
    </location>
</feature>
<feature type="topological domain" description="Mitochondrial intermembrane" evidence="6">
    <location>
        <begin position="50"/>
        <end position="62"/>
    </location>
</feature>
<feature type="transmembrane region" description="Helical; Name=1" evidence="6">
    <location>
        <begin position="63"/>
        <end position="85"/>
    </location>
</feature>
<feature type="topological domain" description="Mitochondrial matrix" evidence="6">
    <location>
        <begin position="86"/>
        <end position="120"/>
    </location>
</feature>
<feature type="transmembrane region" description="Helical; Name=2" evidence="6">
    <location>
        <begin position="121"/>
        <end position="140"/>
    </location>
</feature>
<feature type="topological domain" description="Mitochondrial intermembrane" evidence="6">
    <location>
        <begin position="141"/>
        <end position="160"/>
    </location>
</feature>
<feature type="transmembrane region" description="Helical; Name=3" evidence="6">
    <location>
        <begin position="161"/>
        <end position="182"/>
    </location>
</feature>
<feature type="topological domain" description="Mitochondrial matrix" evidence="6">
    <location>
        <begin position="183"/>
        <end position="217"/>
    </location>
</feature>
<feature type="transmembrane region" description="Helical; Name=4" evidence="6">
    <location>
        <begin position="218"/>
        <end position="237"/>
    </location>
</feature>
<feature type="topological domain" description="Mitochondrial intermembrane" evidence="6">
    <location>
        <begin position="238"/>
        <end position="260"/>
    </location>
</feature>
<feature type="transmembrane region" description="Helical; Name=5" evidence="6">
    <location>
        <begin position="261"/>
        <end position="283"/>
    </location>
</feature>
<feature type="topological domain" description="Mitochondrial matrix" evidence="6">
    <location>
        <begin position="284"/>
        <end position="313"/>
    </location>
</feature>
<feature type="transmembrane region" description="Helical; Name=6" evidence="6">
    <location>
        <begin position="314"/>
        <end position="332"/>
    </location>
</feature>
<feature type="topological domain" description="Mitochondrial intermembrane" evidence="6">
    <location>
        <begin position="333"/>
        <end position="361"/>
    </location>
</feature>
<feature type="repeat" description="Solcar 1">
    <location>
        <begin position="62"/>
        <end position="146"/>
    </location>
</feature>
<feature type="repeat" description="Solcar 2">
    <location>
        <begin position="159"/>
        <end position="243"/>
    </location>
</feature>
<feature type="repeat" description="Solcar 3">
    <location>
        <begin position="260"/>
        <end position="338"/>
    </location>
</feature>
<feature type="region of interest" description="Disordered" evidence="7">
    <location>
        <begin position="25"/>
        <end position="44"/>
    </location>
</feature>
<feature type="modified residue" description="N6-acetyllysine" evidence="4">
    <location>
        <position position="98"/>
    </location>
</feature>
<feature type="modified residue" description="N6-methyllysine" evidence="4">
    <location>
        <position position="111"/>
    </location>
</feature>
<feature type="modified residue" description="Phosphotyrosine" evidence="4">
    <location>
        <position position="195"/>
    </location>
</feature>
<feature type="modified residue" description="N6-acetyllysine" evidence="5">
    <location>
        <position position="208"/>
    </location>
</feature>
<gene>
    <name evidence="4" type="primary">SLC25A3</name>
    <name type="synonym">PHC</name>
</gene>